<feature type="chain" id="PRO_0000087009" description="Protein ERD1">
    <location>
        <begin position="1"/>
        <end position="362"/>
    </location>
</feature>
<feature type="topological domain" description="Extracellular" evidence="1">
    <location>
        <begin position="1"/>
        <end position="24"/>
    </location>
</feature>
<feature type="transmembrane region" description="Helical" evidence="1">
    <location>
        <begin position="25"/>
        <end position="45"/>
    </location>
</feature>
<feature type="topological domain" description="Cytoplasmic" evidence="1">
    <location>
        <begin position="46"/>
        <end position="84"/>
    </location>
</feature>
<feature type="transmembrane region" description="Helical" evidence="1">
    <location>
        <begin position="85"/>
        <end position="105"/>
    </location>
</feature>
<feature type="topological domain" description="Extracellular" evidence="1">
    <location>
        <begin position="106"/>
        <end position="109"/>
    </location>
</feature>
<feature type="transmembrane region" description="Helical" evidence="1">
    <location>
        <begin position="110"/>
        <end position="130"/>
    </location>
</feature>
<feature type="topological domain" description="Cytoplasmic" evidence="1">
    <location>
        <begin position="131"/>
        <end position="362"/>
    </location>
</feature>
<feature type="domain" description="EXS" evidence="2">
    <location>
        <begin position="181"/>
        <end position="362"/>
    </location>
</feature>
<feature type="sequence conflict" description="In Ref. 2; CAA36211." evidence="3" ref="2">
    <original>A</original>
    <variation>G</variation>
    <location>
        <position position="168"/>
    </location>
</feature>
<dbReference type="EMBL" id="U33007">
    <property type="protein sequence ID" value="AAB64888.1"/>
    <property type="molecule type" value="Genomic_DNA"/>
</dbReference>
<dbReference type="EMBL" id="X51949">
    <property type="protein sequence ID" value="CAA36211.1"/>
    <property type="molecule type" value="Genomic_DNA"/>
</dbReference>
<dbReference type="EMBL" id="BK006938">
    <property type="protein sequence ID" value="DAA12255.2"/>
    <property type="molecule type" value="Genomic_DNA"/>
</dbReference>
<dbReference type="PIR" id="S69698">
    <property type="entry name" value="S69698"/>
</dbReference>
<dbReference type="RefSeq" id="NP_010702.4">
    <property type="nucleotide sequence ID" value="NM_001180722.4"/>
</dbReference>
<dbReference type="SMR" id="P16151"/>
<dbReference type="BioGRID" id="32473">
    <property type="interactions" value="401"/>
</dbReference>
<dbReference type="DIP" id="DIP-7316N"/>
<dbReference type="FunCoup" id="P16151">
    <property type="interactions" value="85"/>
</dbReference>
<dbReference type="IntAct" id="P16151">
    <property type="interactions" value="36"/>
</dbReference>
<dbReference type="MINT" id="P16151"/>
<dbReference type="STRING" id="4932.YDR414C"/>
<dbReference type="TCDB" id="2.A.94.1.7">
    <property type="family name" value="the phosphate permease (pho1) family"/>
</dbReference>
<dbReference type="PaxDb" id="4932-YDR414C"/>
<dbReference type="PeptideAtlas" id="P16151"/>
<dbReference type="EnsemblFungi" id="YDR414C_mRNA">
    <property type="protein sequence ID" value="YDR414C"/>
    <property type="gene ID" value="YDR414C"/>
</dbReference>
<dbReference type="GeneID" id="852023"/>
<dbReference type="KEGG" id="sce:YDR414C"/>
<dbReference type="AGR" id="SGD:S000002822"/>
<dbReference type="SGD" id="S000002822">
    <property type="gene designation" value="ERD1"/>
</dbReference>
<dbReference type="VEuPathDB" id="FungiDB:YDR414C"/>
<dbReference type="eggNOG" id="KOG1162">
    <property type="taxonomic scope" value="Eukaryota"/>
</dbReference>
<dbReference type="HOGENOM" id="CLU_765368_0_0_1"/>
<dbReference type="InParanoid" id="P16151"/>
<dbReference type="OMA" id="FRRWIWI"/>
<dbReference type="OrthoDB" id="2159384at2759"/>
<dbReference type="BioCyc" id="YEAST:G3O-29956-MONOMER"/>
<dbReference type="BioGRID-ORCS" id="852023">
    <property type="hits" value="0 hits in 10 CRISPR screens"/>
</dbReference>
<dbReference type="PRO" id="PR:P16151"/>
<dbReference type="Proteomes" id="UP000002311">
    <property type="component" value="Chromosome IV"/>
</dbReference>
<dbReference type="RNAct" id="P16151">
    <property type="molecule type" value="protein"/>
</dbReference>
<dbReference type="GO" id="GO:0005789">
    <property type="term" value="C:endoplasmic reticulum membrane"/>
    <property type="evidence" value="ECO:0007669"/>
    <property type="project" value="UniProtKB-SubCell"/>
</dbReference>
<dbReference type="GO" id="GO:0016020">
    <property type="term" value="C:membrane"/>
    <property type="evidence" value="ECO:0000314"/>
    <property type="project" value="SGD"/>
</dbReference>
<dbReference type="GO" id="GO:0006486">
    <property type="term" value="P:protein glycosylation"/>
    <property type="evidence" value="ECO:0000315"/>
    <property type="project" value="SGD"/>
</dbReference>
<dbReference type="GO" id="GO:0006621">
    <property type="term" value="P:protein retention in ER lumen"/>
    <property type="evidence" value="ECO:0000315"/>
    <property type="project" value="SGD"/>
</dbReference>
<dbReference type="GO" id="GO:0015031">
    <property type="term" value="P:protein transport"/>
    <property type="evidence" value="ECO:0007669"/>
    <property type="project" value="UniProtKB-KW"/>
</dbReference>
<dbReference type="GO" id="GO:0000301">
    <property type="term" value="P:retrograde transport, vesicle recycling within Golgi"/>
    <property type="evidence" value="ECO:0000315"/>
    <property type="project" value="SGD"/>
</dbReference>
<dbReference type="InterPro" id="IPR004342">
    <property type="entry name" value="EXS_C"/>
</dbReference>
<dbReference type="PANTHER" id="PTHR10783:SF46">
    <property type="entry name" value="PROTEIN ERD1 HOMOLOG 2"/>
    <property type="match status" value="1"/>
</dbReference>
<dbReference type="PANTHER" id="PTHR10783">
    <property type="entry name" value="XENOTROPIC AND POLYTROPIC RETROVIRUS RECEPTOR 1-RELATED"/>
    <property type="match status" value="1"/>
</dbReference>
<dbReference type="Pfam" id="PF03124">
    <property type="entry name" value="EXS"/>
    <property type="match status" value="1"/>
</dbReference>
<dbReference type="PROSITE" id="PS51380">
    <property type="entry name" value="EXS"/>
    <property type="match status" value="1"/>
</dbReference>
<protein>
    <recommendedName>
        <fullName>Protein ERD1</fullName>
    </recommendedName>
</protein>
<sequence>MEKSESNSEGLYLQNILNVPPPQRFIVLIILALWIWTWILKFFLHSNLDVSQVILTRVPHDIRPGYTLQQLHRTARNFALKITRIIIPFHFATVFLFEFMNIIEGPLKNIILIVYFLPLIQCVTIFWFLLKECQIIKYCTRRCLLIESSPRSLRNTYILISDTLTSFAKPLIDFTLFTSLIFREPFTHFDLSVALLPVLVRLLQCLREYRLLHEATLLFNALKYSCNLPILFCTWRSRVYEGSINEERLHHVQRWFMLINSSYTLFWDVRMDWSLDSLTSLRSRSKSAVTLKKKMYHSAILVDFLLRFWWLWVYLSQNLKLVAADSDYIFFQGEMQYFEVIRRGIWVVFKLDAEYYIKFASK</sequence>
<keyword id="KW-0256">Endoplasmic reticulum</keyword>
<keyword id="KW-0472">Membrane</keyword>
<keyword id="KW-0653">Protein transport</keyword>
<keyword id="KW-1185">Reference proteome</keyword>
<keyword id="KW-0812">Transmembrane</keyword>
<keyword id="KW-1133">Transmembrane helix</keyword>
<keyword id="KW-0813">Transport</keyword>
<name>ERD1_YEAST</name>
<accession>P16151</accession>
<accession>D6VT45</accession>
<reference key="1">
    <citation type="journal article" date="1990" name="EMBO J.">
        <title>ERD1, a yeast gene required for the retention of luminal endoplasmic reticulum proteins, affects glycoprotein processing in the Golgi apparatus.</title>
        <authorList>
            <person name="Hardwick K."/>
            <person name="Lewis M."/>
            <person name="Semenza J."/>
            <person name="Dean N."/>
            <person name="Pelham H."/>
        </authorList>
    </citation>
    <scope>NUCLEOTIDE SEQUENCE [GENOMIC DNA]</scope>
</reference>
<reference key="2">
    <citation type="journal article" date="1997" name="Nature">
        <title>The nucleotide sequence of Saccharomyces cerevisiae chromosome IV.</title>
        <authorList>
            <person name="Jacq C."/>
            <person name="Alt-Moerbe J."/>
            <person name="Andre B."/>
            <person name="Arnold W."/>
            <person name="Bahr A."/>
            <person name="Ballesta J.P.G."/>
            <person name="Bargues M."/>
            <person name="Baron L."/>
            <person name="Becker A."/>
            <person name="Biteau N."/>
            <person name="Bloecker H."/>
            <person name="Blugeon C."/>
            <person name="Boskovic J."/>
            <person name="Brandt P."/>
            <person name="Brueckner M."/>
            <person name="Buitrago M.J."/>
            <person name="Coster F."/>
            <person name="Delaveau T."/>
            <person name="del Rey F."/>
            <person name="Dujon B."/>
            <person name="Eide L.G."/>
            <person name="Garcia-Cantalejo J.M."/>
            <person name="Goffeau A."/>
            <person name="Gomez-Peris A."/>
            <person name="Granotier C."/>
            <person name="Hanemann V."/>
            <person name="Hankeln T."/>
            <person name="Hoheisel J.D."/>
            <person name="Jaeger W."/>
            <person name="Jimenez A."/>
            <person name="Jonniaux J.-L."/>
            <person name="Kraemer C."/>
            <person name="Kuester H."/>
            <person name="Laamanen P."/>
            <person name="Legros Y."/>
            <person name="Louis E.J."/>
            <person name="Moeller-Rieker S."/>
            <person name="Monnet A."/>
            <person name="Moro M."/>
            <person name="Mueller-Auer S."/>
            <person name="Nussbaumer B."/>
            <person name="Paricio N."/>
            <person name="Paulin L."/>
            <person name="Perea J."/>
            <person name="Perez-Alonso M."/>
            <person name="Perez-Ortin J.E."/>
            <person name="Pohl T.M."/>
            <person name="Prydz H."/>
            <person name="Purnelle B."/>
            <person name="Rasmussen S.W."/>
            <person name="Remacha M.A."/>
            <person name="Revuelta J.L."/>
            <person name="Rieger M."/>
            <person name="Salom D."/>
            <person name="Saluz H.P."/>
            <person name="Saiz J.E."/>
            <person name="Saren A.-M."/>
            <person name="Schaefer M."/>
            <person name="Scharfe M."/>
            <person name="Schmidt E.R."/>
            <person name="Schneider C."/>
            <person name="Scholler P."/>
            <person name="Schwarz S."/>
            <person name="Soler-Mira A."/>
            <person name="Urrestarazu L.A."/>
            <person name="Verhasselt P."/>
            <person name="Vissers S."/>
            <person name="Voet M."/>
            <person name="Volckaert G."/>
            <person name="Wagner G."/>
            <person name="Wambutt R."/>
            <person name="Wedler E."/>
            <person name="Wedler H."/>
            <person name="Woelfl S."/>
            <person name="Harris D.E."/>
            <person name="Bowman S."/>
            <person name="Brown D."/>
            <person name="Churcher C.M."/>
            <person name="Connor R."/>
            <person name="Dedman K."/>
            <person name="Gentles S."/>
            <person name="Hamlin N."/>
            <person name="Hunt S."/>
            <person name="Jones L."/>
            <person name="McDonald S."/>
            <person name="Murphy L.D."/>
            <person name="Niblett D."/>
            <person name="Odell C."/>
            <person name="Oliver K."/>
            <person name="Rajandream M.A."/>
            <person name="Richards C."/>
            <person name="Shore L."/>
            <person name="Walsh S.V."/>
            <person name="Barrell B.G."/>
            <person name="Dietrich F.S."/>
            <person name="Mulligan J.T."/>
            <person name="Allen E."/>
            <person name="Araujo R."/>
            <person name="Aviles E."/>
            <person name="Berno A."/>
            <person name="Carpenter J."/>
            <person name="Chen E."/>
            <person name="Cherry J.M."/>
            <person name="Chung E."/>
            <person name="Duncan M."/>
            <person name="Hunicke-Smith S."/>
            <person name="Hyman R.W."/>
            <person name="Komp C."/>
            <person name="Lashkari D."/>
            <person name="Lew H."/>
            <person name="Lin D."/>
            <person name="Mosedale D."/>
            <person name="Nakahara K."/>
            <person name="Namath A."/>
            <person name="Oefner P."/>
            <person name="Oh C."/>
            <person name="Petel F.X."/>
            <person name="Roberts D."/>
            <person name="Schramm S."/>
            <person name="Schroeder M."/>
            <person name="Shogren T."/>
            <person name="Shroff N."/>
            <person name="Winant A."/>
            <person name="Yelton M.A."/>
            <person name="Botstein D."/>
            <person name="Davis R.W."/>
            <person name="Johnston M."/>
            <person name="Andrews S."/>
            <person name="Brinkman R."/>
            <person name="Cooper J."/>
            <person name="Ding H."/>
            <person name="Du Z."/>
            <person name="Favello A."/>
            <person name="Fulton L."/>
            <person name="Gattung S."/>
            <person name="Greco T."/>
            <person name="Hallsworth K."/>
            <person name="Hawkins J."/>
            <person name="Hillier L.W."/>
            <person name="Jier M."/>
            <person name="Johnson D."/>
            <person name="Johnston L."/>
            <person name="Kirsten J."/>
            <person name="Kucaba T."/>
            <person name="Langston Y."/>
            <person name="Latreille P."/>
            <person name="Le T."/>
            <person name="Mardis E."/>
            <person name="Menezes S."/>
            <person name="Miller N."/>
            <person name="Nhan M."/>
            <person name="Pauley A."/>
            <person name="Peluso D."/>
            <person name="Rifkin L."/>
            <person name="Riles L."/>
            <person name="Taich A."/>
            <person name="Trevaskis E."/>
            <person name="Vignati D."/>
            <person name="Wilcox L."/>
            <person name="Wohldman P."/>
            <person name="Vaudin M."/>
            <person name="Wilson R."/>
            <person name="Waterston R."/>
            <person name="Albermann K."/>
            <person name="Hani J."/>
            <person name="Heumann K."/>
            <person name="Kleine K."/>
            <person name="Mewes H.-W."/>
            <person name="Zollner A."/>
            <person name="Zaccaria P."/>
        </authorList>
    </citation>
    <scope>NUCLEOTIDE SEQUENCE [LARGE SCALE GENOMIC DNA]</scope>
    <source>
        <strain>ATCC 204508 / S288c</strain>
    </source>
</reference>
<reference key="3">
    <citation type="journal article" date="2014" name="G3 (Bethesda)">
        <title>The reference genome sequence of Saccharomyces cerevisiae: Then and now.</title>
        <authorList>
            <person name="Engel S.R."/>
            <person name="Dietrich F.S."/>
            <person name="Fisk D.G."/>
            <person name="Binkley G."/>
            <person name="Balakrishnan R."/>
            <person name="Costanzo M.C."/>
            <person name="Dwight S.S."/>
            <person name="Hitz B.C."/>
            <person name="Karra K."/>
            <person name="Nash R.S."/>
            <person name="Weng S."/>
            <person name="Wong E.D."/>
            <person name="Lloyd P."/>
            <person name="Skrzypek M.S."/>
            <person name="Miyasato S.R."/>
            <person name="Simison M."/>
            <person name="Cherry J.M."/>
        </authorList>
    </citation>
    <scope>GENOME REANNOTATION</scope>
    <scope>SEQUENCE REVISION TO 168</scope>
    <source>
        <strain>ATCC 204508 / S288c</strain>
    </source>
</reference>
<reference key="4">
    <citation type="journal article" date="2006" name="Proc. Natl. Acad. Sci. U.S.A.">
        <title>A global topology map of the Saccharomyces cerevisiae membrane proteome.</title>
        <authorList>
            <person name="Kim H."/>
            <person name="Melen K."/>
            <person name="Oesterberg M."/>
            <person name="von Heijne G."/>
        </authorList>
    </citation>
    <scope>TOPOLOGY [LARGE SCALE ANALYSIS]</scope>
    <source>
        <strain>ATCC 208353 / W303-1A</strain>
    </source>
</reference>
<comment type="function">
    <text>Required for the retention of luminal endoplasmic reticulum proteins, affects glycoprotein processing in the Golgi apparatus.</text>
</comment>
<comment type="subcellular location">
    <subcellularLocation>
        <location>Endoplasmic reticulum membrane</location>
        <topology>Multi-pass membrane protein</topology>
    </subcellularLocation>
</comment>
<comment type="similarity">
    <text evidence="3">Belongs to the ERD1 family.</text>
</comment>
<organism>
    <name type="scientific">Saccharomyces cerevisiae (strain ATCC 204508 / S288c)</name>
    <name type="common">Baker's yeast</name>
    <dbReference type="NCBI Taxonomy" id="559292"/>
    <lineage>
        <taxon>Eukaryota</taxon>
        <taxon>Fungi</taxon>
        <taxon>Dikarya</taxon>
        <taxon>Ascomycota</taxon>
        <taxon>Saccharomycotina</taxon>
        <taxon>Saccharomycetes</taxon>
        <taxon>Saccharomycetales</taxon>
        <taxon>Saccharomycetaceae</taxon>
        <taxon>Saccharomyces</taxon>
    </lineage>
</organism>
<proteinExistence type="evidence at protein level"/>
<gene>
    <name type="primary">ERD1</name>
    <name type="ordered locus">YDR414C</name>
    <name type="ORF">D9461.4</name>
</gene>
<evidence type="ECO:0000255" key="1"/>
<evidence type="ECO:0000255" key="2">
    <source>
        <dbReference type="PROSITE-ProRule" id="PRU00712"/>
    </source>
</evidence>
<evidence type="ECO:0000305" key="3"/>